<gene>
    <name type="ordered locus">At1g03700</name>
    <name type="ORF">F21B7.30</name>
</gene>
<name>CSPL1_ARATH</name>
<comment type="subunit">
    <text evidence="1">Homodimer and heterodimers.</text>
</comment>
<comment type="subcellular location">
    <subcellularLocation>
        <location evidence="1">Cell membrane</location>
        <topology evidence="1">Multi-pass membrane protein</topology>
    </subcellularLocation>
</comment>
<comment type="similarity">
    <text evidence="3">Belongs to the Casparian strip membrane proteins (CASP) family.</text>
</comment>
<keyword id="KW-1003">Cell membrane</keyword>
<keyword id="KW-0472">Membrane</keyword>
<keyword id="KW-1185">Reference proteome</keyword>
<keyword id="KW-0812">Transmembrane</keyword>
<keyword id="KW-1133">Transmembrane helix</keyword>
<accession>Q9LR57</accession>
<dbReference type="EMBL" id="AC002560">
    <property type="protein sequence ID" value="AAF86520.1"/>
    <property type="molecule type" value="Genomic_DNA"/>
</dbReference>
<dbReference type="EMBL" id="CP002684">
    <property type="protein sequence ID" value="AEE27599.1"/>
    <property type="molecule type" value="Genomic_DNA"/>
</dbReference>
<dbReference type="PIR" id="T00891">
    <property type="entry name" value="T00891"/>
</dbReference>
<dbReference type="RefSeq" id="NP_563689.1">
    <property type="nucleotide sequence ID" value="NM_100249.5"/>
</dbReference>
<dbReference type="PaxDb" id="3702-AT1G03700.1"/>
<dbReference type="ProteomicsDB" id="222625"/>
<dbReference type="EnsemblPlants" id="AT1G03700.1">
    <property type="protein sequence ID" value="AT1G03700.1"/>
    <property type="gene ID" value="AT1G03700"/>
</dbReference>
<dbReference type="GeneID" id="839428"/>
<dbReference type="Gramene" id="AT1G03700.1">
    <property type="protein sequence ID" value="AT1G03700.1"/>
    <property type="gene ID" value="AT1G03700"/>
</dbReference>
<dbReference type="KEGG" id="ath:AT1G03700"/>
<dbReference type="Araport" id="AT1G03700"/>
<dbReference type="TAIR" id="AT1G03700">
    <property type="gene designation" value="CASPL1C2"/>
</dbReference>
<dbReference type="eggNOG" id="ENOG502RZXX">
    <property type="taxonomic scope" value="Eukaryota"/>
</dbReference>
<dbReference type="HOGENOM" id="CLU_066104_3_0_1"/>
<dbReference type="InParanoid" id="Q9LR57"/>
<dbReference type="OMA" id="WFVIANA"/>
<dbReference type="OrthoDB" id="1906221at2759"/>
<dbReference type="PhylomeDB" id="Q9LR57"/>
<dbReference type="PRO" id="PR:Q9LR57"/>
<dbReference type="Proteomes" id="UP000006548">
    <property type="component" value="Chromosome 1"/>
</dbReference>
<dbReference type="ExpressionAtlas" id="Q9LR57">
    <property type="expression patterns" value="baseline and differential"/>
</dbReference>
<dbReference type="GO" id="GO:0005886">
    <property type="term" value="C:plasma membrane"/>
    <property type="evidence" value="ECO:0007669"/>
    <property type="project" value="UniProtKB-SubCell"/>
</dbReference>
<dbReference type="InterPro" id="IPR006459">
    <property type="entry name" value="CASP/CASPL"/>
</dbReference>
<dbReference type="InterPro" id="IPR006702">
    <property type="entry name" value="CASP_dom"/>
</dbReference>
<dbReference type="InterPro" id="IPR044173">
    <property type="entry name" value="CASPL"/>
</dbReference>
<dbReference type="NCBIfam" id="TIGR01569">
    <property type="entry name" value="A_tha_TIGR01569"/>
    <property type="match status" value="1"/>
</dbReference>
<dbReference type="PANTHER" id="PTHR36488">
    <property type="entry name" value="CASP-LIKE PROTEIN 1U1"/>
    <property type="match status" value="1"/>
</dbReference>
<dbReference type="PANTHER" id="PTHR36488:SF8">
    <property type="entry name" value="CASP-LIKE PROTEIN 1U1"/>
    <property type="match status" value="1"/>
</dbReference>
<dbReference type="Pfam" id="PF04535">
    <property type="entry name" value="CASP_dom"/>
    <property type="match status" value="1"/>
</dbReference>
<organism>
    <name type="scientific">Arabidopsis thaliana</name>
    <name type="common">Mouse-ear cress</name>
    <dbReference type="NCBI Taxonomy" id="3702"/>
    <lineage>
        <taxon>Eukaryota</taxon>
        <taxon>Viridiplantae</taxon>
        <taxon>Streptophyta</taxon>
        <taxon>Embryophyta</taxon>
        <taxon>Tracheophyta</taxon>
        <taxon>Spermatophyta</taxon>
        <taxon>Magnoliopsida</taxon>
        <taxon>eudicotyledons</taxon>
        <taxon>Gunneridae</taxon>
        <taxon>Pentapetalae</taxon>
        <taxon>rosids</taxon>
        <taxon>malvids</taxon>
        <taxon>Brassicales</taxon>
        <taxon>Brassicaceae</taxon>
        <taxon>Camelineae</taxon>
        <taxon>Arabidopsis</taxon>
    </lineage>
</organism>
<evidence type="ECO:0000250" key="1"/>
<evidence type="ECO:0000255" key="2"/>
<evidence type="ECO:0000305" key="3"/>
<feature type="chain" id="PRO_0000308651" description="CASP-like protein 1C2">
    <location>
        <begin position="1"/>
        <end position="164"/>
    </location>
</feature>
<feature type="topological domain" description="Cytoplasmic" evidence="2">
    <location>
        <begin position="1"/>
        <end position="8"/>
    </location>
</feature>
<feature type="transmembrane region" description="Helical" evidence="2">
    <location>
        <begin position="9"/>
        <end position="29"/>
    </location>
</feature>
<feature type="topological domain" description="Extracellular" evidence="2">
    <location>
        <begin position="30"/>
        <end position="51"/>
    </location>
</feature>
<feature type="transmembrane region" description="Helical" evidence="2">
    <location>
        <begin position="52"/>
        <end position="72"/>
    </location>
</feature>
<feature type="topological domain" description="Cytoplasmic" evidence="2">
    <location>
        <begin position="73"/>
        <end position="80"/>
    </location>
</feature>
<feature type="transmembrane region" description="Helical" evidence="2">
    <location>
        <begin position="81"/>
        <end position="101"/>
    </location>
</feature>
<feature type="topological domain" description="Extracellular" evidence="2">
    <location>
        <begin position="102"/>
        <end position="129"/>
    </location>
</feature>
<feature type="transmembrane region" description="Helical" evidence="2">
    <location>
        <begin position="130"/>
        <end position="150"/>
    </location>
</feature>
<feature type="topological domain" description="Cytoplasmic" evidence="2">
    <location>
        <begin position="151"/>
        <end position="164"/>
    </location>
</feature>
<reference key="1">
    <citation type="journal article" date="2000" name="Nature">
        <title>Sequence and analysis of chromosome 1 of the plant Arabidopsis thaliana.</title>
        <authorList>
            <person name="Theologis A."/>
            <person name="Ecker J.R."/>
            <person name="Palm C.J."/>
            <person name="Federspiel N.A."/>
            <person name="Kaul S."/>
            <person name="White O."/>
            <person name="Alonso J."/>
            <person name="Altafi H."/>
            <person name="Araujo R."/>
            <person name="Bowman C.L."/>
            <person name="Brooks S.Y."/>
            <person name="Buehler E."/>
            <person name="Chan A."/>
            <person name="Chao Q."/>
            <person name="Chen H."/>
            <person name="Cheuk R.F."/>
            <person name="Chin C.W."/>
            <person name="Chung M.K."/>
            <person name="Conn L."/>
            <person name="Conway A.B."/>
            <person name="Conway A.R."/>
            <person name="Creasy T.H."/>
            <person name="Dewar K."/>
            <person name="Dunn P."/>
            <person name="Etgu P."/>
            <person name="Feldblyum T.V."/>
            <person name="Feng J.-D."/>
            <person name="Fong B."/>
            <person name="Fujii C.Y."/>
            <person name="Gill J.E."/>
            <person name="Goldsmith A.D."/>
            <person name="Haas B."/>
            <person name="Hansen N.F."/>
            <person name="Hughes B."/>
            <person name="Huizar L."/>
            <person name="Hunter J.L."/>
            <person name="Jenkins J."/>
            <person name="Johnson-Hopson C."/>
            <person name="Khan S."/>
            <person name="Khaykin E."/>
            <person name="Kim C.J."/>
            <person name="Koo H.L."/>
            <person name="Kremenetskaia I."/>
            <person name="Kurtz D.B."/>
            <person name="Kwan A."/>
            <person name="Lam B."/>
            <person name="Langin-Hooper S."/>
            <person name="Lee A."/>
            <person name="Lee J.M."/>
            <person name="Lenz C.A."/>
            <person name="Li J.H."/>
            <person name="Li Y.-P."/>
            <person name="Lin X."/>
            <person name="Liu S.X."/>
            <person name="Liu Z.A."/>
            <person name="Luros J.S."/>
            <person name="Maiti R."/>
            <person name="Marziali A."/>
            <person name="Militscher J."/>
            <person name="Miranda M."/>
            <person name="Nguyen M."/>
            <person name="Nierman W.C."/>
            <person name="Osborne B.I."/>
            <person name="Pai G."/>
            <person name="Peterson J."/>
            <person name="Pham P.K."/>
            <person name="Rizzo M."/>
            <person name="Rooney T."/>
            <person name="Rowley D."/>
            <person name="Sakano H."/>
            <person name="Salzberg S.L."/>
            <person name="Schwartz J.R."/>
            <person name="Shinn P."/>
            <person name="Southwick A.M."/>
            <person name="Sun H."/>
            <person name="Tallon L.J."/>
            <person name="Tambunga G."/>
            <person name="Toriumi M.J."/>
            <person name="Town C.D."/>
            <person name="Utterback T."/>
            <person name="Van Aken S."/>
            <person name="Vaysberg M."/>
            <person name="Vysotskaia V.S."/>
            <person name="Walker M."/>
            <person name="Wu D."/>
            <person name="Yu G."/>
            <person name="Fraser C.M."/>
            <person name="Venter J.C."/>
            <person name="Davis R.W."/>
        </authorList>
    </citation>
    <scope>NUCLEOTIDE SEQUENCE [LARGE SCALE GENOMIC DNA]</scope>
    <source>
        <strain>cv. Columbia</strain>
    </source>
</reference>
<reference key="2">
    <citation type="journal article" date="2017" name="Plant J.">
        <title>Araport11: a complete reannotation of the Arabidopsis thaliana reference genome.</title>
        <authorList>
            <person name="Cheng C.Y."/>
            <person name="Krishnakumar V."/>
            <person name="Chan A.P."/>
            <person name="Thibaud-Nissen F."/>
            <person name="Schobel S."/>
            <person name="Town C.D."/>
        </authorList>
    </citation>
    <scope>GENOME REANNOTATION</scope>
    <source>
        <strain>cv. Columbia</strain>
    </source>
</reference>
<reference key="3">
    <citation type="journal article" date="2014" name="Plant Physiol.">
        <title>Functional and evolutionary analysis of the CASPARIAN STRIP MEMBRANE DOMAIN PROTEIN family.</title>
        <authorList>
            <person name="Roppolo D."/>
            <person name="Boeckmann B."/>
            <person name="Pfister A."/>
            <person name="Boutet E."/>
            <person name="Rubio M.C."/>
            <person name="Denervaud-Tendon V."/>
            <person name="Vermeer J.E."/>
            <person name="Gheyselinck J."/>
            <person name="Xenarios I."/>
            <person name="Geldner N."/>
        </authorList>
    </citation>
    <scope>GENE FAMILY</scope>
    <scope>NOMENCLATURE</scope>
</reference>
<sequence>MVKLTQRLGGLVLRFAAFCAALGAVIAMITSRERSSFFVISLVAKYSDLAAFKYFVIANAIVTVYSFLVLFLPKESLLWKFVVVLDLMVTMLLTSSLSAAVAVAQVGKRGNANAGWLPICGQVPRFCDQITGALIAGLVALVLYVFLLIFSIHHVVDPFLLRKS</sequence>
<protein>
    <recommendedName>
        <fullName>CASP-like protein 1C2</fullName>
        <shortName>AtCASPL1C2</shortName>
    </recommendedName>
</protein>
<proteinExistence type="evidence at transcript level"/>